<organism>
    <name type="scientific">Escherichia coli O8 (strain IAI1)</name>
    <dbReference type="NCBI Taxonomy" id="585034"/>
    <lineage>
        <taxon>Bacteria</taxon>
        <taxon>Pseudomonadati</taxon>
        <taxon>Pseudomonadota</taxon>
        <taxon>Gammaproteobacteria</taxon>
        <taxon>Enterobacterales</taxon>
        <taxon>Enterobacteriaceae</taxon>
        <taxon>Escherichia</taxon>
    </lineage>
</organism>
<keyword id="KW-0067">ATP-binding</keyword>
<keyword id="KW-0460">Magnesium</keyword>
<keyword id="KW-0547">Nucleotide-binding</keyword>
<keyword id="KW-0808">Transferase</keyword>
<keyword id="KW-0819">tRNA processing</keyword>
<feature type="chain" id="PRO_1000118526" description="tRNA dimethylallyltransferase">
    <location>
        <begin position="1"/>
        <end position="316"/>
    </location>
</feature>
<feature type="region of interest" description="Interaction with substrate tRNA" evidence="1">
    <location>
        <begin position="42"/>
        <end position="45"/>
    </location>
</feature>
<feature type="region of interest" description="Interaction with substrate tRNA" evidence="1">
    <location>
        <begin position="166"/>
        <end position="170"/>
    </location>
</feature>
<feature type="region of interest" description="Interaction with substrate tRNA" evidence="1">
    <location>
        <begin position="247"/>
        <end position="252"/>
    </location>
</feature>
<feature type="region of interest" description="Interaction with substrate tRNA" evidence="1">
    <location>
        <begin position="280"/>
        <end position="287"/>
    </location>
</feature>
<feature type="binding site" evidence="1">
    <location>
        <begin position="17"/>
        <end position="24"/>
    </location>
    <ligand>
        <name>ATP</name>
        <dbReference type="ChEBI" id="CHEBI:30616"/>
    </ligand>
</feature>
<feature type="binding site" evidence="1">
    <location>
        <begin position="19"/>
        <end position="24"/>
    </location>
    <ligand>
        <name>substrate</name>
    </ligand>
</feature>
<feature type="site" description="Interaction with substrate tRNA" evidence="1">
    <location>
        <position position="108"/>
    </location>
</feature>
<feature type="site" description="Interaction with substrate tRNA" evidence="1">
    <location>
        <position position="130"/>
    </location>
</feature>
<name>MIAA_ECO8A</name>
<protein>
    <recommendedName>
        <fullName evidence="1">tRNA dimethylallyltransferase</fullName>
        <ecNumber evidence="1">2.5.1.75</ecNumber>
    </recommendedName>
    <alternativeName>
        <fullName evidence="1">Dimethylallyl diphosphate:tRNA dimethylallyltransferase</fullName>
        <shortName evidence="1">DMAPP:tRNA dimethylallyltransferase</shortName>
        <shortName evidence="1">DMATase</shortName>
    </alternativeName>
    <alternativeName>
        <fullName evidence="1">Isopentenyl-diphosphate:tRNA isopentenyltransferase</fullName>
        <shortName evidence="1">IPP transferase</shortName>
        <shortName evidence="1">IPPT</shortName>
        <shortName evidence="1">IPTase</shortName>
    </alternativeName>
</protein>
<comment type="function">
    <text evidence="1">Catalyzes the transfer of a dimethylallyl group onto the adenine at position 37 in tRNAs that read codons beginning with uridine, leading to the formation of N6-(dimethylallyl)adenosine (i(6)A).</text>
</comment>
<comment type="catalytic activity">
    <reaction evidence="1">
        <text>adenosine(37) in tRNA + dimethylallyl diphosphate = N(6)-dimethylallyladenosine(37) in tRNA + diphosphate</text>
        <dbReference type="Rhea" id="RHEA:26482"/>
        <dbReference type="Rhea" id="RHEA-COMP:10162"/>
        <dbReference type="Rhea" id="RHEA-COMP:10375"/>
        <dbReference type="ChEBI" id="CHEBI:33019"/>
        <dbReference type="ChEBI" id="CHEBI:57623"/>
        <dbReference type="ChEBI" id="CHEBI:74411"/>
        <dbReference type="ChEBI" id="CHEBI:74415"/>
        <dbReference type="EC" id="2.5.1.75"/>
    </reaction>
</comment>
<comment type="cofactor">
    <cofactor evidence="1">
        <name>Mg(2+)</name>
        <dbReference type="ChEBI" id="CHEBI:18420"/>
    </cofactor>
</comment>
<comment type="subunit">
    <text evidence="1">Monomer.</text>
</comment>
<comment type="similarity">
    <text evidence="1">Belongs to the IPP transferase family.</text>
</comment>
<proteinExistence type="inferred from homology"/>
<evidence type="ECO:0000255" key="1">
    <source>
        <dbReference type="HAMAP-Rule" id="MF_00185"/>
    </source>
</evidence>
<dbReference type="EC" id="2.5.1.75" evidence="1"/>
<dbReference type="EMBL" id="CU928160">
    <property type="protein sequence ID" value="CAR01146.1"/>
    <property type="molecule type" value="Genomic_DNA"/>
</dbReference>
<dbReference type="RefSeq" id="WP_001280345.1">
    <property type="nucleotide sequence ID" value="NC_011741.1"/>
</dbReference>
<dbReference type="SMR" id="B7M8T1"/>
<dbReference type="GeneID" id="93777650"/>
<dbReference type="KEGG" id="ecr:ECIAI1_4404"/>
<dbReference type="HOGENOM" id="CLU_032616_0_0_6"/>
<dbReference type="GO" id="GO:0005524">
    <property type="term" value="F:ATP binding"/>
    <property type="evidence" value="ECO:0007669"/>
    <property type="project" value="UniProtKB-UniRule"/>
</dbReference>
<dbReference type="GO" id="GO:0052381">
    <property type="term" value="F:tRNA dimethylallyltransferase activity"/>
    <property type="evidence" value="ECO:0007669"/>
    <property type="project" value="UniProtKB-UniRule"/>
</dbReference>
<dbReference type="GO" id="GO:0006400">
    <property type="term" value="P:tRNA modification"/>
    <property type="evidence" value="ECO:0007669"/>
    <property type="project" value="TreeGrafter"/>
</dbReference>
<dbReference type="FunFam" id="1.10.20.140:FF:000001">
    <property type="entry name" value="tRNA dimethylallyltransferase"/>
    <property type="match status" value="1"/>
</dbReference>
<dbReference type="FunFam" id="1.10.287.890:FF:000001">
    <property type="entry name" value="tRNA dimethylallyltransferase"/>
    <property type="match status" value="1"/>
</dbReference>
<dbReference type="Gene3D" id="1.10.20.140">
    <property type="match status" value="1"/>
</dbReference>
<dbReference type="Gene3D" id="1.10.287.890">
    <property type="entry name" value="Crystal structure of tRNA isopentenylpyrophosphate transferase (bh2366) domain"/>
    <property type="match status" value="1"/>
</dbReference>
<dbReference type="Gene3D" id="3.40.50.300">
    <property type="entry name" value="P-loop containing nucleotide triphosphate hydrolases"/>
    <property type="match status" value="1"/>
</dbReference>
<dbReference type="HAMAP" id="MF_00185">
    <property type="entry name" value="IPP_trans"/>
    <property type="match status" value="1"/>
</dbReference>
<dbReference type="InterPro" id="IPR039657">
    <property type="entry name" value="Dimethylallyltransferase"/>
</dbReference>
<dbReference type="InterPro" id="IPR018022">
    <property type="entry name" value="IPT"/>
</dbReference>
<dbReference type="InterPro" id="IPR027417">
    <property type="entry name" value="P-loop_NTPase"/>
</dbReference>
<dbReference type="NCBIfam" id="TIGR00174">
    <property type="entry name" value="miaA"/>
    <property type="match status" value="1"/>
</dbReference>
<dbReference type="PANTHER" id="PTHR11088">
    <property type="entry name" value="TRNA DIMETHYLALLYLTRANSFERASE"/>
    <property type="match status" value="1"/>
</dbReference>
<dbReference type="PANTHER" id="PTHR11088:SF60">
    <property type="entry name" value="TRNA DIMETHYLALLYLTRANSFERASE"/>
    <property type="match status" value="1"/>
</dbReference>
<dbReference type="Pfam" id="PF01715">
    <property type="entry name" value="IPPT"/>
    <property type="match status" value="1"/>
</dbReference>
<dbReference type="SUPFAM" id="SSF52540">
    <property type="entry name" value="P-loop containing nucleoside triphosphate hydrolases"/>
    <property type="match status" value="1"/>
</dbReference>
<sequence length="316" mass="35065">MSDISKASLPKAIFLMGPTASGKTALAIELRKILPVELISVDSALIYKGMDIGTAKPNAEELLAAPHRLLDIRDPSQAYSAADFRRDALAEMADITAAGRIPLLVGGTMLYFKALLEGLSPLPSADPEVRARIEQQAAEQGWESLHRQLQEVDPVAAARIHPNDPQRLSRALEVFFISGKTLTELTQTSGDALPYQVHQFAIAPASRELLHQRIEQRFHQMLASGFEAEVRALFARGDLHTDLPSIRCVGYRQMWSYLEGEISYDEMVYRGVCATRQLAKRQITWLRGWEGVHWLDSEKPEQARDEVLQVVGAIAG</sequence>
<gene>
    <name evidence="1" type="primary">miaA</name>
    <name type="ordered locus">ECIAI1_4404</name>
</gene>
<accession>B7M8T1</accession>
<reference key="1">
    <citation type="journal article" date="2009" name="PLoS Genet.">
        <title>Organised genome dynamics in the Escherichia coli species results in highly diverse adaptive paths.</title>
        <authorList>
            <person name="Touchon M."/>
            <person name="Hoede C."/>
            <person name="Tenaillon O."/>
            <person name="Barbe V."/>
            <person name="Baeriswyl S."/>
            <person name="Bidet P."/>
            <person name="Bingen E."/>
            <person name="Bonacorsi S."/>
            <person name="Bouchier C."/>
            <person name="Bouvet O."/>
            <person name="Calteau A."/>
            <person name="Chiapello H."/>
            <person name="Clermont O."/>
            <person name="Cruveiller S."/>
            <person name="Danchin A."/>
            <person name="Diard M."/>
            <person name="Dossat C."/>
            <person name="Karoui M.E."/>
            <person name="Frapy E."/>
            <person name="Garry L."/>
            <person name="Ghigo J.M."/>
            <person name="Gilles A.M."/>
            <person name="Johnson J."/>
            <person name="Le Bouguenec C."/>
            <person name="Lescat M."/>
            <person name="Mangenot S."/>
            <person name="Martinez-Jehanne V."/>
            <person name="Matic I."/>
            <person name="Nassif X."/>
            <person name="Oztas S."/>
            <person name="Petit M.A."/>
            <person name="Pichon C."/>
            <person name="Rouy Z."/>
            <person name="Ruf C.S."/>
            <person name="Schneider D."/>
            <person name="Tourret J."/>
            <person name="Vacherie B."/>
            <person name="Vallenet D."/>
            <person name="Medigue C."/>
            <person name="Rocha E.P.C."/>
            <person name="Denamur E."/>
        </authorList>
    </citation>
    <scope>NUCLEOTIDE SEQUENCE [LARGE SCALE GENOMIC DNA]</scope>
    <source>
        <strain>IAI1</strain>
    </source>
</reference>